<feature type="chain" id="PRO_1000187712" description="Membrane protein insertase YidC">
    <location>
        <begin position="1"/>
        <end position="519"/>
    </location>
</feature>
<feature type="transmembrane region" description="Helical" evidence="1">
    <location>
        <begin position="6"/>
        <end position="26"/>
    </location>
</feature>
<feature type="transmembrane region" description="Helical" evidence="1">
    <location>
        <begin position="298"/>
        <end position="318"/>
    </location>
</feature>
<feature type="transmembrane region" description="Helical" evidence="1">
    <location>
        <begin position="324"/>
        <end position="344"/>
    </location>
</feature>
<feature type="transmembrane region" description="Helical" evidence="1">
    <location>
        <begin position="390"/>
        <end position="410"/>
    </location>
</feature>
<feature type="transmembrane region" description="Helical" evidence="1">
    <location>
        <begin position="434"/>
        <end position="454"/>
    </location>
</feature>
<feature type="transmembrane region" description="Helical" evidence="1">
    <location>
        <begin position="471"/>
        <end position="491"/>
    </location>
</feature>
<evidence type="ECO:0000255" key="1">
    <source>
        <dbReference type="HAMAP-Rule" id="MF_01810"/>
    </source>
</evidence>
<proteinExistence type="inferred from homology"/>
<protein>
    <recommendedName>
        <fullName evidence="1">Membrane protein insertase YidC</fullName>
    </recommendedName>
    <alternativeName>
        <fullName evidence="1">Foldase YidC</fullName>
    </alternativeName>
    <alternativeName>
        <fullName evidence="1">Membrane integrase YidC</fullName>
    </alternativeName>
    <alternativeName>
        <fullName evidence="1">Membrane protein YidC</fullName>
    </alternativeName>
</protein>
<name>YIDC_ENDTX</name>
<sequence>MQKNSILFVTLSAFTVFIWYFFFAQPSEQSYRQMMQLQNTVAVSESGVNKFKNADLNEFQIDDIYAKEEHINIETEQYKAVLTNKGGGVLSWSVKEKNGQWVDLVFPESAPVMANFPNLTYKVVSKSAEKIVFEYASKEGWKITKIYNLSDLYMHNLNISVEKNAKTPFPQIDLKWGPGLGTDSKELKENISLTRALVYTAVKPNKLKKLKDNFEPASLCKWTAVDNRYFLVAFIPKNSMDFDKILFSRLEKKHPCSVILKAAEPKDVDKKDYSVNFYLGPKDYKYLKTYDLGLEKTVDFGFFGFLGKIAFSILVFFYKLTHNYGWAIIMLTTIIQILVLPLTLKSFKSSAAMKRVQPVIKDIQTKYKDNPQRLKAEMLNIYQSQKVNPLGGCLPMLLQLPIFWAFFTMLRNAYELRNEGWILWVKDLSAADQFMQFGSFNLNLLPLMMGIGMFFQQRMTTVTSDPTQRKIMYIMPVIFTFMFWSFPSGLVLYWLTNSLISMIEQYFIMKKDAITVKHI</sequence>
<accession>B1GZ50</accession>
<keyword id="KW-0997">Cell inner membrane</keyword>
<keyword id="KW-1003">Cell membrane</keyword>
<keyword id="KW-0143">Chaperone</keyword>
<keyword id="KW-0472">Membrane</keyword>
<keyword id="KW-0653">Protein transport</keyword>
<keyword id="KW-0812">Transmembrane</keyword>
<keyword id="KW-1133">Transmembrane helix</keyword>
<keyword id="KW-0813">Transport</keyword>
<organism>
    <name type="scientific">Endomicrobium trichonymphae</name>
    <dbReference type="NCBI Taxonomy" id="1408204"/>
    <lineage>
        <taxon>Bacteria</taxon>
        <taxon>Pseudomonadati</taxon>
        <taxon>Elusimicrobiota</taxon>
        <taxon>Endomicrobiia</taxon>
        <taxon>Endomicrobiales</taxon>
        <taxon>Endomicrobiaceae</taxon>
        <taxon>Candidatus Endomicrobiellum</taxon>
    </lineage>
</organism>
<gene>
    <name evidence="1" type="primary">yidC</name>
    <name type="ordered locus">TGRD_049</name>
</gene>
<reference key="1">
    <citation type="journal article" date="2008" name="Proc. Natl. Acad. Sci. U.S.A.">
        <title>Complete genome of the uncultured termite group 1 bacteria in a single host protist cell.</title>
        <authorList>
            <person name="Hongoh Y."/>
            <person name="Sharma V.K."/>
            <person name="Prakash T."/>
            <person name="Noda S."/>
            <person name="Taylor T.D."/>
            <person name="Kudo T."/>
            <person name="Sakaki Y."/>
            <person name="Toyoda A."/>
            <person name="Hattori M."/>
            <person name="Ohkuma M."/>
        </authorList>
    </citation>
    <scope>NUCLEOTIDE SEQUENCE [LARGE SCALE GENOMIC DNA]</scope>
</reference>
<dbReference type="EMBL" id="AP009510">
    <property type="protein sequence ID" value="BAG13532.1"/>
    <property type="molecule type" value="Genomic_DNA"/>
</dbReference>
<dbReference type="RefSeq" id="WP_015423061.1">
    <property type="nucleotide sequence ID" value="NC_020419.1"/>
</dbReference>
<dbReference type="SMR" id="B1GZ50"/>
<dbReference type="STRING" id="471821.TGRD_049"/>
<dbReference type="KEGG" id="rsd:TGRD_049"/>
<dbReference type="PATRIC" id="fig|471821.5.peg.85"/>
<dbReference type="HOGENOM" id="CLU_016535_3_0_0"/>
<dbReference type="Proteomes" id="UP000001691">
    <property type="component" value="Chromosome"/>
</dbReference>
<dbReference type="GO" id="GO:0005886">
    <property type="term" value="C:plasma membrane"/>
    <property type="evidence" value="ECO:0007669"/>
    <property type="project" value="UniProtKB-SubCell"/>
</dbReference>
<dbReference type="GO" id="GO:0032977">
    <property type="term" value="F:membrane insertase activity"/>
    <property type="evidence" value="ECO:0007669"/>
    <property type="project" value="InterPro"/>
</dbReference>
<dbReference type="GO" id="GO:0051205">
    <property type="term" value="P:protein insertion into membrane"/>
    <property type="evidence" value="ECO:0007669"/>
    <property type="project" value="TreeGrafter"/>
</dbReference>
<dbReference type="GO" id="GO:0015031">
    <property type="term" value="P:protein transport"/>
    <property type="evidence" value="ECO:0007669"/>
    <property type="project" value="UniProtKB-KW"/>
</dbReference>
<dbReference type="CDD" id="cd20070">
    <property type="entry name" value="5TM_YidC_Alb3"/>
    <property type="match status" value="1"/>
</dbReference>
<dbReference type="CDD" id="cd19961">
    <property type="entry name" value="EcYidC-like_peri"/>
    <property type="match status" value="1"/>
</dbReference>
<dbReference type="Gene3D" id="2.70.98.90">
    <property type="match status" value="1"/>
</dbReference>
<dbReference type="HAMAP" id="MF_01810">
    <property type="entry name" value="YidC_type1"/>
    <property type="match status" value="1"/>
</dbReference>
<dbReference type="InterPro" id="IPR019998">
    <property type="entry name" value="Membr_insert_YidC"/>
</dbReference>
<dbReference type="InterPro" id="IPR028053">
    <property type="entry name" value="Membr_insert_YidC_N"/>
</dbReference>
<dbReference type="InterPro" id="IPR001708">
    <property type="entry name" value="YidC/ALB3/OXA1/COX18"/>
</dbReference>
<dbReference type="InterPro" id="IPR028055">
    <property type="entry name" value="YidC/Oxa/ALB_C"/>
</dbReference>
<dbReference type="InterPro" id="IPR047196">
    <property type="entry name" value="YidC_ALB_C"/>
</dbReference>
<dbReference type="InterPro" id="IPR038221">
    <property type="entry name" value="YidC_periplasmic_sf"/>
</dbReference>
<dbReference type="NCBIfam" id="TIGR03593">
    <property type="entry name" value="yidC_nterm"/>
    <property type="match status" value="1"/>
</dbReference>
<dbReference type="NCBIfam" id="TIGR03592">
    <property type="entry name" value="yidC_oxa1_cterm"/>
    <property type="match status" value="1"/>
</dbReference>
<dbReference type="PANTHER" id="PTHR12428:SF65">
    <property type="entry name" value="CYTOCHROME C OXIDASE ASSEMBLY PROTEIN COX18, MITOCHONDRIAL"/>
    <property type="match status" value="1"/>
</dbReference>
<dbReference type="PANTHER" id="PTHR12428">
    <property type="entry name" value="OXA1"/>
    <property type="match status" value="1"/>
</dbReference>
<dbReference type="Pfam" id="PF02096">
    <property type="entry name" value="60KD_IMP"/>
    <property type="match status" value="1"/>
</dbReference>
<dbReference type="Pfam" id="PF14849">
    <property type="entry name" value="YidC_periplas"/>
    <property type="match status" value="1"/>
</dbReference>
<dbReference type="PRINTS" id="PR00701">
    <property type="entry name" value="60KDINNERMP"/>
</dbReference>
<dbReference type="PRINTS" id="PR01900">
    <property type="entry name" value="YIDCPROTEIN"/>
</dbReference>
<comment type="function">
    <text evidence="1">Required for the insertion and/or proper folding and/or complex formation of integral membrane proteins into the membrane. Involved in integration of membrane proteins that insert both dependently and independently of the Sec translocase complex, as well as at least some lipoproteins. Aids folding of multispanning membrane proteins.</text>
</comment>
<comment type="subunit">
    <text evidence="1">Interacts with the Sec translocase complex via SecD. Specifically interacts with transmembrane segments of nascent integral membrane proteins during membrane integration.</text>
</comment>
<comment type="subcellular location">
    <subcellularLocation>
        <location evidence="1">Cell inner membrane</location>
        <topology evidence="1">Multi-pass membrane protein</topology>
    </subcellularLocation>
</comment>
<comment type="similarity">
    <text evidence="1">Belongs to the OXA1/ALB3/YidC family. Type 1 subfamily.</text>
</comment>